<dbReference type="EC" id="3.1.-.-" evidence="1"/>
<dbReference type="EMBL" id="AF322977">
    <property type="protein sequence ID" value="ABG36590.1"/>
    <property type="molecule type" value="Genomic_DNA"/>
</dbReference>
<dbReference type="SMR" id="Q18LC9"/>
<dbReference type="GO" id="GO:0030430">
    <property type="term" value="C:host cell cytoplasm"/>
    <property type="evidence" value="ECO:0007669"/>
    <property type="project" value="UniProtKB-SubCell"/>
</dbReference>
<dbReference type="GO" id="GO:0042025">
    <property type="term" value="C:host cell nucleus"/>
    <property type="evidence" value="ECO:0007669"/>
    <property type="project" value="UniProtKB-SubCell"/>
</dbReference>
<dbReference type="GO" id="GO:0003677">
    <property type="term" value="F:DNA binding"/>
    <property type="evidence" value="ECO:0007669"/>
    <property type="project" value="InterPro"/>
</dbReference>
<dbReference type="GO" id="GO:0004519">
    <property type="term" value="F:endonuclease activity"/>
    <property type="evidence" value="ECO:0007669"/>
    <property type="project" value="UniProtKB-KW"/>
</dbReference>
<dbReference type="GO" id="GO:0004527">
    <property type="term" value="F:exonuclease activity"/>
    <property type="evidence" value="ECO:0007669"/>
    <property type="project" value="UniProtKB-KW"/>
</dbReference>
<dbReference type="Gene3D" id="3.90.320.10">
    <property type="match status" value="1"/>
</dbReference>
<dbReference type="HAMAP" id="MF_04009">
    <property type="entry name" value="HSV_AN"/>
    <property type="match status" value="1"/>
</dbReference>
<dbReference type="InterPro" id="IPR001616">
    <property type="entry name" value="Herpes_alk_exo"/>
</dbReference>
<dbReference type="InterPro" id="IPR011604">
    <property type="entry name" value="PDDEXK-like_dom_sf"/>
</dbReference>
<dbReference type="InterPro" id="IPR011335">
    <property type="entry name" value="Restrct_endonuc-II-like"/>
</dbReference>
<dbReference type="InterPro" id="IPR034720">
    <property type="entry name" value="Viral_alk_exo"/>
</dbReference>
<dbReference type="Pfam" id="PF01771">
    <property type="entry name" value="Viral_alk_exo"/>
    <property type="match status" value="1"/>
</dbReference>
<dbReference type="PRINTS" id="PR00924">
    <property type="entry name" value="ALKEXNUCLASE"/>
</dbReference>
<dbReference type="SUPFAM" id="SSF52980">
    <property type="entry name" value="Restriction endonuclease-like"/>
    <property type="match status" value="1"/>
</dbReference>
<feature type="chain" id="PRO_0000408153" description="Alkaline nuclease">
    <location>
        <begin position="1"/>
        <end position="484"/>
    </location>
</feature>
<feature type="site" description="Required for function" evidence="1">
    <location>
        <position position="176"/>
    </location>
</feature>
<feature type="site" description="Required for function" evidence="1">
    <location>
        <position position="214"/>
    </location>
</feature>
<feature type="site" description="Required for function" evidence="1">
    <location>
        <position position="237"/>
    </location>
</feature>
<feature type="site" description="Required for function" evidence="1">
    <location>
        <position position="239"/>
    </location>
</feature>
<name>AN_ELHVK</name>
<evidence type="ECO:0000255" key="1">
    <source>
        <dbReference type="HAMAP-Rule" id="MF_04009"/>
    </source>
</evidence>
<reference key="1">
    <citation type="journal article" date="2007" name="J. Virol.">
        <title>Identification of novel rodent herpesviruses, including the first gammaherpesvirus of Mus musculus.</title>
        <authorList>
            <person name="Ehlers B."/>
            <person name="Kuchler J."/>
            <person name="Yasmum N."/>
            <person name="Dural G."/>
            <person name="Voigt S."/>
            <person name="Schmidt-Chanasit J."/>
            <person name="Jakel T."/>
            <person name="Matuschka F.R."/>
            <person name="Richter D."/>
            <person name="Essbauer S."/>
            <person name="Hughes D.J."/>
            <person name="Summers C."/>
            <person name="Bennett M."/>
            <person name="Stewart J.P."/>
            <person name="Ulrich R.G."/>
        </authorList>
    </citation>
    <scope>NUCLEOTIDE SEQUENCE [GENOMIC DNA]</scope>
</reference>
<reference key="2">
    <citation type="journal article" date="2001" name="J. Gen. Virol.">
        <title>Genetic and ultrastructural characterization of a European isolate of the fatal endotheliotropic elephant herpesvirus.</title>
        <authorList>
            <person name="Ehlers B."/>
            <person name="Burkhardt S."/>
            <person name="Goltz M."/>
            <person name="Bergmann V."/>
            <person name="Ochs A."/>
            <person name="Weiler H."/>
            <person name="Hentschke J."/>
        </authorList>
    </citation>
    <scope>NUCLEOTIDE SEQUENCE [GENOMIC DNA]</scope>
</reference>
<proteinExistence type="inferred from homology"/>
<protein>
    <recommendedName>
        <fullName evidence="1">Alkaline nuclease</fullName>
        <ecNumber evidence="1">3.1.-.-</ecNumber>
    </recommendedName>
</protein>
<keyword id="KW-0255">Endonuclease</keyword>
<keyword id="KW-0269">Exonuclease</keyword>
<keyword id="KW-1035">Host cytoplasm</keyword>
<keyword id="KW-1048">Host nucleus</keyword>
<keyword id="KW-0945">Host-virus interaction</keyword>
<keyword id="KW-0378">Hydrolase</keyword>
<keyword id="KW-0540">Nuclease</keyword>
<organismHost>
    <name type="scientific">Elephas maximus</name>
    <name type="common">Indian elephant</name>
    <dbReference type="NCBI Taxonomy" id="9783"/>
</organismHost>
<organismHost>
    <name type="scientific">Loxodonta africana</name>
    <name type="common">African elephant</name>
    <dbReference type="NCBI Taxonomy" id="9785"/>
</organismHost>
<organismHost>
    <name type="scientific">Loxodonta cyclotis</name>
    <name type="common">African forest elephant</name>
    <dbReference type="NCBI Taxonomy" id="99490"/>
</organismHost>
<organism>
    <name type="scientific">Elephantid herpesvirus 1 (isolate Asian elephant/Berlin/Kiba/1998)</name>
    <name type="common">EIHV-1</name>
    <name type="synonym">Elephant endotheliotropic herpesvirus</name>
    <dbReference type="NCBI Taxonomy" id="654902"/>
    <lineage>
        <taxon>Viruses</taxon>
        <taxon>Duplodnaviria</taxon>
        <taxon>Heunggongvirae</taxon>
        <taxon>Peploviricota</taxon>
        <taxon>Herviviricetes</taxon>
        <taxon>Herpesvirales</taxon>
        <taxon>Orthoherpesviridae</taxon>
        <taxon>Betaherpesvirinae</taxon>
        <taxon>Proboscivirus</taxon>
        <taxon>Proboscivirus elephantidbeta1</taxon>
        <taxon>Elephantid herpesvirus 1</taxon>
    </lineage>
</organism>
<comment type="function">
    <text evidence="1">Plays a role in processing non linear or branched viral DNA intermediates in order to promote the production of mature packaged unit-length linear progeny viral DNA molecules. Exhibits endonuclease and exonuclease activities and accepts both double-stranded and single-stranded DNA as substrate. Exonuclease digestion of DNA is in the 5'-&gt; 3' direction and the products are 5'-monophosphate nucleosides. Additionally, forms a recombinase with the major DNA-binding protein, which displays strand exchange activity.</text>
</comment>
<comment type="subunit">
    <text evidence="1">Interacts with major DNA-binding protein; this interaction increases the nuclease processivity of the alkaline exonuclease.</text>
</comment>
<comment type="subcellular location">
    <subcellularLocation>
        <location evidence="1">Host nucleus</location>
    </subcellularLocation>
    <subcellularLocation>
        <location evidence="1">Host cytoplasm</location>
    </subcellularLocation>
</comment>
<comment type="similarity">
    <text evidence="1">Belongs to the herpesviridae alkaline nuclease family.</text>
</comment>
<sequence length="484" mass="54945">MDFLSILPPQRHCTSELCDNDESVQAIISALEYTGLAKILTETFSADEFVEALDARLLYIAHIILSCKETNVPINTDTFLCPLAERIKVDVDDLNAGSLKCMKVLLHHCTNRYFIKIVEKMTRGQSSNLLWFLVRNELVTGSSVVKQCSYKPGLNSVAHGIFRPASRFEVFGKVHEPIVRDVIATFVERRPIPVSETLGLLIDPFSGTFGASIDLCYGIEEHDDGFVTVGERAHVYEIKCMARYIYSAADVEGFLDNPTLKGFASLIKGATFPLIEHRLPGATPSSGAHIVSHDRMFETNRKRKSIYESNDYVRRLLNINRGVKSTVYIFREKPQPDERDKLTLECLAKFTANIFLNARHKYFDQTSMQYFVVTQHYINDHPDPECIEPDTLPRVSVVTALFKTRNIGTHHSLEVNHKTYPNSAIPFALIVTPVAFDAEILSVFLRETFDNYAQQVYNKSKIRLWDPNFLRGFVASHRELEKTP</sequence>
<accession>Q18LC9</accession>